<dbReference type="EMBL" id="AM933173">
    <property type="protein sequence ID" value="CAR36027.1"/>
    <property type="molecule type" value="Genomic_DNA"/>
</dbReference>
<dbReference type="RefSeq" id="WP_000488294.1">
    <property type="nucleotide sequence ID" value="NC_011274.1"/>
</dbReference>
<dbReference type="SMR" id="B5RH55"/>
<dbReference type="KEGG" id="seg:SG0120"/>
<dbReference type="HOGENOM" id="CLU_107907_2_0_6"/>
<dbReference type="Proteomes" id="UP000008321">
    <property type="component" value="Chromosome"/>
</dbReference>
<dbReference type="GO" id="GO:0005737">
    <property type="term" value="C:cytoplasm"/>
    <property type="evidence" value="ECO:0007669"/>
    <property type="project" value="UniProtKB-UniRule"/>
</dbReference>
<dbReference type="GO" id="GO:0009295">
    <property type="term" value="C:nucleoid"/>
    <property type="evidence" value="ECO:0007669"/>
    <property type="project" value="UniProtKB-SubCell"/>
</dbReference>
<dbReference type="GO" id="GO:0003700">
    <property type="term" value="F:DNA-binding transcription factor activity"/>
    <property type="evidence" value="ECO:0007669"/>
    <property type="project" value="UniProtKB-UniRule"/>
</dbReference>
<dbReference type="GO" id="GO:0000976">
    <property type="term" value="F:transcription cis-regulatory region binding"/>
    <property type="evidence" value="ECO:0007669"/>
    <property type="project" value="TreeGrafter"/>
</dbReference>
<dbReference type="GO" id="GO:2000143">
    <property type="term" value="P:negative regulation of DNA-templated transcription initiation"/>
    <property type="evidence" value="ECO:0007669"/>
    <property type="project" value="TreeGrafter"/>
</dbReference>
<dbReference type="CDD" id="cd16321">
    <property type="entry name" value="MraZ_C"/>
    <property type="match status" value="1"/>
</dbReference>
<dbReference type="CDD" id="cd16320">
    <property type="entry name" value="MraZ_N"/>
    <property type="match status" value="1"/>
</dbReference>
<dbReference type="FunFam" id="3.40.1550.20:FF:000001">
    <property type="entry name" value="Transcriptional regulator MraZ"/>
    <property type="match status" value="1"/>
</dbReference>
<dbReference type="Gene3D" id="3.40.1550.20">
    <property type="entry name" value="Transcriptional regulator MraZ domain"/>
    <property type="match status" value="1"/>
</dbReference>
<dbReference type="HAMAP" id="MF_01008">
    <property type="entry name" value="MraZ"/>
    <property type="match status" value="1"/>
</dbReference>
<dbReference type="InterPro" id="IPR003444">
    <property type="entry name" value="MraZ"/>
</dbReference>
<dbReference type="InterPro" id="IPR035644">
    <property type="entry name" value="MraZ_C"/>
</dbReference>
<dbReference type="InterPro" id="IPR020603">
    <property type="entry name" value="MraZ_dom"/>
</dbReference>
<dbReference type="InterPro" id="IPR035642">
    <property type="entry name" value="MraZ_N"/>
</dbReference>
<dbReference type="InterPro" id="IPR038619">
    <property type="entry name" value="MraZ_sf"/>
</dbReference>
<dbReference type="InterPro" id="IPR007159">
    <property type="entry name" value="SpoVT-AbrB_dom"/>
</dbReference>
<dbReference type="InterPro" id="IPR037914">
    <property type="entry name" value="SpoVT-AbrB_sf"/>
</dbReference>
<dbReference type="NCBIfam" id="TIGR00242">
    <property type="entry name" value="division/cell wall cluster transcriptional repressor MraZ"/>
    <property type="match status" value="1"/>
</dbReference>
<dbReference type="PANTHER" id="PTHR34701">
    <property type="entry name" value="TRANSCRIPTIONAL REGULATOR MRAZ"/>
    <property type="match status" value="1"/>
</dbReference>
<dbReference type="PANTHER" id="PTHR34701:SF1">
    <property type="entry name" value="TRANSCRIPTIONAL REGULATOR MRAZ"/>
    <property type="match status" value="1"/>
</dbReference>
<dbReference type="Pfam" id="PF02381">
    <property type="entry name" value="MraZ"/>
    <property type="match status" value="2"/>
</dbReference>
<dbReference type="SUPFAM" id="SSF89447">
    <property type="entry name" value="AbrB/MazE/MraZ-like"/>
    <property type="match status" value="1"/>
</dbReference>
<dbReference type="PROSITE" id="PS51740">
    <property type="entry name" value="SPOVT_ABRB"/>
    <property type="match status" value="2"/>
</dbReference>
<protein>
    <recommendedName>
        <fullName>Transcriptional regulator MraZ</fullName>
    </recommendedName>
</protein>
<accession>B5RH55</accession>
<organism>
    <name type="scientific">Salmonella gallinarum (strain 287/91 / NCTC 13346)</name>
    <dbReference type="NCBI Taxonomy" id="550538"/>
    <lineage>
        <taxon>Bacteria</taxon>
        <taxon>Pseudomonadati</taxon>
        <taxon>Pseudomonadota</taxon>
        <taxon>Gammaproteobacteria</taxon>
        <taxon>Enterobacterales</taxon>
        <taxon>Enterobacteriaceae</taxon>
        <taxon>Salmonella</taxon>
    </lineage>
</organism>
<feature type="chain" id="PRO_1000191329" description="Transcriptional regulator MraZ">
    <location>
        <begin position="1"/>
        <end position="152"/>
    </location>
</feature>
<feature type="domain" description="SpoVT-AbrB 1" evidence="2">
    <location>
        <begin position="5"/>
        <end position="52"/>
    </location>
</feature>
<feature type="domain" description="SpoVT-AbrB 2" evidence="2">
    <location>
        <begin position="81"/>
        <end position="124"/>
    </location>
</feature>
<sequence length="152" mass="17435">MFRGATLVNLDSKGRLTVPTRYREQLIESATGQMVCTIDIHHPCLLLYPLPEWEIIEQKLSRLSSMNPVERRVQRLLLGHASECQMDGAGRLLIAPVLRQHAGLTKEVMLVGQFNKFELWDETTWYQQVKEDIDAEQSATETLSERLQDLSL</sequence>
<comment type="function">
    <text evidence="1">Negatively regulates its own expression and that of the subsequent genes in the proximal part of the division and cell wall (dcw) gene cluster. Acts by binding directly to DNA. May also regulate the expression of genes outside the dcw cluster.</text>
</comment>
<comment type="subunit">
    <text evidence="1">Forms oligomers.</text>
</comment>
<comment type="subcellular location">
    <subcellularLocation>
        <location evidence="1">Cytoplasm</location>
        <location evidence="1">Nucleoid</location>
    </subcellularLocation>
</comment>
<comment type="similarity">
    <text evidence="1">Belongs to the MraZ family.</text>
</comment>
<reference key="1">
    <citation type="journal article" date="2008" name="Genome Res.">
        <title>Comparative genome analysis of Salmonella enteritidis PT4 and Salmonella gallinarum 287/91 provides insights into evolutionary and host adaptation pathways.</title>
        <authorList>
            <person name="Thomson N.R."/>
            <person name="Clayton D.J."/>
            <person name="Windhorst D."/>
            <person name="Vernikos G."/>
            <person name="Davidson S."/>
            <person name="Churcher C."/>
            <person name="Quail M.A."/>
            <person name="Stevens M."/>
            <person name="Jones M.A."/>
            <person name="Watson M."/>
            <person name="Barron A."/>
            <person name="Layton A."/>
            <person name="Pickard D."/>
            <person name="Kingsley R.A."/>
            <person name="Bignell A."/>
            <person name="Clark L."/>
            <person name="Harris B."/>
            <person name="Ormond D."/>
            <person name="Abdellah Z."/>
            <person name="Brooks K."/>
            <person name="Cherevach I."/>
            <person name="Chillingworth T."/>
            <person name="Woodward J."/>
            <person name="Norberczak H."/>
            <person name="Lord A."/>
            <person name="Arrowsmith C."/>
            <person name="Jagels K."/>
            <person name="Moule S."/>
            <person name="Mungall K."/>
            <person name="Saunders M."/>
            <person name="Whitehead S."/>
            <person name="Chabalgoity J.A."/>
            <person name="Maskell D."/>
            <person name="Humphreys T."/>
            <person name="Roberts M."/>
            <person name="Barrow P.A."/>
            <person name="Dougan G."/>
            <person name="Parkhill J."/>
        </authorList>
    </citation>
    <scope>NUCLEOTIDE SEQUENCE [LARGE SCALE GENOMIC DNA]</scope>
    <source>
        <strain>287/91 / NCTC 13346</strain>
    </source>
</reference>
<evidence type="ECO:0000255" key="1">
    <source>
        <dbReference type="HAMAP-Rule" id="MF_01008"/>
    </source>
</evidence>
<evidence type="ECO:0000255" key="2">
    <source>
        <dbReference type="PROSITE-ProRule" id="PRU01076"/>
    </source>
</evidence>
<keyword id="KW-0963">Cytoplasm</keyword>
<keyword id="KW-0238">DNA-binding</keyword>
<keyword id="KW-0677">Repeat</keyword>
<keyword id="KW-0678">Repressor</keyword>
<keyword id="KW-0804">Transcription</keyword>
<keyword id="KW-0805">Transcription regulation</keyword>
<gene>
    <name evidence="1" type="primary">mraZ</name>
    <name type="ordered locus">SG0120</name>
</gene>
<proteinExistence type="inferred from homology"/>
<name>MRAZ_SALG2</name>